<organism>
    <name type="scientific">Mycobacterium tuberculosis (strain ATCC 25618 / H37Rv)</name>
    <dbReference type="NCBI Taxonomy" id="83332"/>
    <lineage>
        <taxon>Bacteria</taxon>
        <taxon>Bacillati</taxon>
        <taxon>Actinomycetota</taxon>
        <taxon>Actinomycetes</taxon>
        <taxon>Mycobacteriales</taxon>
        <taxon>Mycobacteriaceae</taxon>
        <taxon>Mycobacterium</taxon>
        <taxon>Mycobacterium tuberculosis complex</taxon>
    </lineage>
</organism>
<sequence length="87" mass="10237">MPYTVRFTTTARRDLHKLPPRILAAVVEFAFGDLSREPLRVGKPLRRELAGTFSARRGTYRLLYRIDDEHTTVVILRVDHRADIYRR</sequence>
<keyword id="KW-0002">3D-structure</keyword>
<keyword id="KW-0238">DNA-binding</keyword>
<keyword id="KW-0378">Hydrolase</keyword>
<keyword id="KW-0540">Nuclease</keyword>
<keyword id="KW-1185">Reference proteome</keyword>
<keyword id="KW-0678">Repressor</keyword>
<keyword id="KW-1277">Toxin-antitoxin system</keyword>
<keyword id="KW-0804">Transcription</keyword>
<keyword id="KW-0805">Transcription regulation</keyword>
<name>RELG_MYCTU</name>
<accession>O33348</accession>
<accession>L0TDL2</accession>
<gene>
    <name type="primary">relG</name>
    <name type="synonym">relE2</name>
    <name type="ordered locus">Rv2866</name>
</gene>
<reference key="1">
    <citation type="journal article" date="1998" name="Nature">
        <title>Deciphering the biology of Mycobacterium tuberculosis from the complete genome sequence.</title>
        <authorList>
            <person name="Cole S.T."/>
            <person name="Brosch R."/>
            <person name="Parkhill J."/>
            <person name="Garnier T."/>
            <person name="Churcher C.M."/>
            <person name="Harris D.E."/>
            <person name="Gordon S.V."/>
            <person name="Eiglmeier K."/>
            <person name="Gas S."/>
            <person name="Barry C.E. III"/>
            <person name="Tekaia F."/>
            <person name="Badcock K."/>
            <person name="Basham D."/>
            <person name="Brown D."/>
            <person name="Chillingworth T."/>
            <person name="Connor R."/>
            <person name="Davies R.M."/>
            <person name="Devlin K."/>
            <person name="Feltwell T."/>
            <person name="Gentles S."/>
            <person name="Hamlin N."/>
            <person name="Holroyd S."/>
            <person name="Hornsby T."/>
            <person name="Jagels K."/>
            <person name="Krogh A."/>
            <person name="McLean J."/>
            <person name="Moule S."/>
            <person name="Murphy L.D."/>
            <person name="Oliver S."/>
            <person name="Osborne J."/>
            <person name="Quail M.A."/>
            <person name="Rajandream M.A."/>
            <person name="Rogers J."/>
            <person name="Rutter S."/>
            <person name="Seeger K."/>
            <person name="Skelton S."/>
            <person name="Squares S."/>
            <person name="Squares R."/>
            <person name="Sulston J.E."/>
            <person name="Taylor K."/>
            <person name="Whitehead S."/>
            <person name="Barrell B.G."/>
        </authorList>
    </citation>
    <scope>NUCLEOTIDE SEQUENCE [LARGE SCALE GENOMIC DNA]</scope>
    <source>
        <strain>ATCC 25618 / H37Rv</strain>
    </source>
</reference>
<reference key="2">
    <citation type="journal article" date="2005" name="Nucleic Acids Res.">
        <title>Toxin-antitoxin loci are highly abundant in free-living but lost from host-associated prokaryotes.</title>
        <authorList>
            <person name="Pandey D.P."/>
            <person name="Gerdes K."/>
        </authorList>
    </citation>
    <scope>POSSIBLE FUNCTION</scope>
    <source>
        <strain>ATCC 25618 / H37Rv</strain>
    </source>
</reference>
<reference key="3">
    <citation type="journal article" date="2009" name="J. Bacteriol.">
        <title>Three Mycobacterium tuberculosis Rel toxin-antitoxin modules inhibit mycobacterial growth and are expressed in infected human macrophages.</title>
        <authorList>
            <person name="Korch S.B."/>
            <person name="Contreras H."/>
            <person name="Clark-Curtiss J.E."/>
        </authorList>
    </citation>
    <scope>FUNCTION AS A TOXIN</scope>
    <scope>FUNCTION AS A TRANSCRIPTIONAL REGULATOR</scope>
    <scope>EXPRESSION IN M.SMEGMATIS</scope>
    <scope>INDUCTION</scope>
    <scope>OPERON STRUCTURE</scope>
    <source>
        <strain>ATCC 25618 / H37Rv</strain>
    </source>
</reference>
<reference key="4">
    <citation type="journal article" date="2009" name="PLoS Genet.">
        <title>Comprehensive functional analysis of Mycobacterium tuberculosis toxin-antitoxin systems: implications for pathogenesis, stress responses, and evolution.</title>
        <authorList>
            <person name="Ramage H.R."/>
            <person name="Connolly L.E."/>
            <person name="Cox J.S."/>
        </authorList>
    </citation>
    <scope>EXPRESSION IN M.SMEGMATIS</scope>
    <scope>FUNCTION AS A TOXIN</scope>
    <source>
        <strain>ATCC 35801 / TMC 107 / Erdman</strain>
    </source>
</reference>
<reference key="5">
    <citation type="journal article" date="2010" name="J. Bacteriol.">
        <title>The three RelE homologs of Mycobacterium tuberculosis have individual, drug-specific effects on bacterial antibiotic tolerance.</title>
        <authorList>
            <person name="Singh R."/>
            <person name="Barry C.E. III"/>
            <person name="Boshoff H.I."/>
        </authorList>
    </citation>
    <scope>FUNCTION IN M.TUBERCULOSIS</scope>
    <scope>INDUCTION</scope>
    <scope>DISRUPTION PHENOTYPE</scope>
    <scope>PUTATIVE FUNCTION IN PERSISTER CELL FORMATION</scope>
    <source>
        <strain>ATCC 27294 / TMC 102 / H37Rv</strain>
    </source>
</reference>
<reference key="6">
    <citation type="journal article" date="2010" name="PLoS ONE">
        <title>Characterization of the interaction and cross-regulation of three Mycobacterium tuberculosis RelBE modules.</title>
        <authorList>
            <person name="Yang M."/>
            <person name="Gao C."/>
            <person name="Wang Y."/>
            <person name="Zhang H."/>
            <person name="He Z.G."/>
        </authorList>
    </citation>
    <scope>FUNCTION AS A TOXIN</scope>
    <scope>SUBUNIT</scope>
    <scope>INTERACTION WITH RELB</scope>
    <source>
        <strain>ATCC 25618 / H37Rv</strain>
    </source>
</reference>
<reference key="7">
    <citation type="journal article" date="2011" name="Mol. Cell. Proteomics">
        <title>Proteogenomic analysis of Mycobacterium tuberculosis by high resolution mass spectrometry.</title>
        <authorList>
            <person name="Kelkar D.S."/>
            <person name="Kumar D."/>
            <person name="Kumar P."/>
            <person name="Balakrishnan L."/>
            <person name="Muthusamy B."/>
            <person name="Yadav A.K."/>
            <person name="Shrivastava P."/>
            <person name="Marimuthu A."/>
            <person name="Anand S."/>
            <person name="Sundaram H."/>
            <person name="Kingsbury R."/>
            <person name="Harsha H.C."/>
            <person name="Nair B."/>
            <person name="Prasad T.S."/>
            <person name="Chauhan D.S."/>
            <person name="Katoch K."/>
            <person name="Katoch V.M."/>
            <person name="Kumar P."/>
            <person name="Chaerkady R."/>
            <person name="Ramachandran S."/>
            <person name="Dash D."/>
            <person name="Pandey A."/>
        </authorList>
    </citation>
    <scope>IDENTIFICATION BY MASS SPECTROMETRY [LARGE SCALE ANALYSIS]</scope>
    <source>
        <strain>ATCC 25618 / H37Rv</strain>
    </source>
</reference>
<reference key="8">
    <citation type="submission" date="2009-02" db="PDB data bank">
        <title>The crystal structure of the toxin-antitoxin complex RelBE2 (Rv2865-2866) from Mycobacterium tuberculosis.</title>
        <authorList>
            <person name="Miallau L."/>
            <person name="Chernishof I."/>
            <person name="Chiang J."/>
            <person name="Arbing M."/>
            <person name="Cascio D."/>
            <person name="Eisenberg D."/>
        </authorList>
    </citation>
    <scope>X-RAY CRYSTALLOGRAPHY (2.00 ANGSTROMS) OF 2-87</scope>
    <source>
        <strain>ATCC 25618 / H37Rv</strain>
    </source>
</reference>
<feature type="chain" id="PRO_0000406200" description="Toxin RelG">
    <location>
        <begin position="1"/>
        <end position="87"/>
    </location>
</feature>
<feature type="strand" evidence="7">
    <location>
        <begin position="4"/>
        <end position="8"/>
    </location>
</feature>
<feature type="helix" evidence="7">
    <location>
        <begin position="9"/>
        <end position="15"/>
    </location>
</feature>
<feature type="helix" evidence="7">
    <location>
        <begin position="20"/>
        <end position="30"/>
    </location>
</feature>
<feature type="helix" evidence="7">
    <location>
        <begin position="33"/>
        <end position="36"/>
    </location>
</feature>
<feature type="turn" evidence="7">
    <location>
        <begin position="38"/>
        <end position="40"/>
    </location>
</feature>
<feature type="strand" evidence="7">
    <location>
        <begin position="41"/>
        <end position="44"/>
    </location>
</feature>
<feature type="helix" evidence="7">
    <location>
        <begin position="47"/>
        <end position="49"/>
    </location>
</feature>
<feature type="strand" evidence="7">
    <location>
        <begin position="53"/>
        <end position="56"/>
    </location>
</feature>
<feature type="strand" evidence="7">
    <location>
        <begin position="58"/>
        <end position="67"/>
    </location>
</feature>
<feature type="turn" evidence="7">
    <location>
        <begin position="68"/>
        <end position="71"/>
    </location>
</feature>
<feature type="strand" evidence="7">
    <location>
        <begin position="72"/>
        <end position="80"/>
    </location>
</feature>
<dbReference type="EC" id="3.1.-.-"/>
<dbReference type="EMBL" id="AL123456">
    <property type="protein sequence ID" value="CCP45668.1"/>
    <property type="molecule type" value="Genomic_DNA"/>
</dbReference>
<dbReference type="PIR" id="D70886">
    <property type="entry name" value="D70886"/>
</dbReference>
<dbReference type="RefSeq" id="NP_217382.1">
    <property type="nucleotide sequence ID" value="NC_000962.3"/>
</dbReference>
<dbReference type="RefSeq" id="WP_003414602.1">
    <property type="nucleotide sequence ID" value="NZ_NVQJ01000006.1"/>
</dbReference>
<dbReference type="PDB" id="3G5O">
    <property type="method" value="X-ray"/>
    <property type="resolution" value="2.00 A"/>
    <property type="chains" value="B/C=2-87"/>
</dbReference>
<dbReference type="PDBsum" id="3G5O"/>
<dbReference type="SMR" id="O33348"/>
<dbReference type="DIP" id="DIP-60145N"/>
<dbReference type="FunCoup" id="O33348">
    <property type="interactions" value="1"/>
</dbReference>
<dbReference type="IntAct" id="O33348">
    <property type="interactions" value="1"/>
</dbReference>
<dbReference type="STRING" id="83332.Rv2866"/>
<dbReference type="PaxDb" id="83332-Rv2866"/>
<dbReference type="DNASU" id="887450"/>
<dbReference type="GeneID" id="887450"/>
<dbReference type="KEGG" id="mtu:Rv2866"/>
<dbReference type="KEGG" id="mtv:RVBD_2866"/>
<dbReference type="TubercuList" id="Rv2866"/>
<dbReference type="eggNOG" id="COG2026">
    <property type="taxonomic scope" value="Bacteria"/>
</dbReference>
<dbReference type="InParanoid" id="O33348"/>
<dbReference type="OrthoDB" id="5326046at2"/>
<dbReference type="PhylomeDB" id="O33348"/>
<dbReference type="EvolutionaryTrace" id="O33348"/>
<dbReference type="Proteomes" id="UP000001584">
    <property type="component" value="Chromosome"/>
</dbReference>
<dbReference type="GO" id="GO:0003677">
    <property type="term" value="F:DNA binding"/>
    <property type="evidence" value="ECO:0007669"/>
    <property type="project" value="UniProtKB-KW"/>
</dbReference>
<dbReference type="GO" id="GO:0004519">
    <property type="term" value="F:endonuclease activity"/>
    <property type="evidence" value="ECO:0000314"/>
    <property type="project" value="MTBBASE"/>
</dbReference>
<dbReference type="GO" id="GO:0006402">
    <property type="term" value="P:mRNA catabolic process"/>
    <property type="evidence" value="ECO:0000318"/>
    <property type="project" value="GO_Central"/>
</dbReference>
<dbReference type="GO" id="GO:0045892">
    <property type="term" value="P:negative regulation of DNA-templated transcription"/>
    <property type="evidence" value="ECO:0000314"/>
    <property type="project" value="MTBBASE"/>
</dbReference>
<dbReference type="GO" id="GO:0045926">
    <property type="term" value="P:negative regulation of growth"/>
    <property type="evidence" value="ECO:0000315"/>
    <property type="project" value="MTBBASE"/>
</dbReference>
<dbReference type="GO" id="GO:0006401">
    <property type="term" value="P:RNA catabolic process"/>
    <property type="evidence" value="ECO:0000314"/>
    <property type="project" value="MTBBASE"/>
</dbReference>
<dbReference type="FunFam" id="3.30.2310.20:FF:000004">
    <property type="entry name" value="Toxin RelE"/>
    <property type="match status" value="1"/>
</dbReference>
<dbReference type="Gene3D" id="3.30.2310.20">
    <property type="entry name" value="RelE-like"/>
    <property type="match status" value="1"/>
</dbReference>
<dbReference type="InterPro" id="IPR007712">
    <property type="entry name" value="RelE/ParE_toxin"/>
</dbReference>
<dbReference type="InterPro" id="IPR035093">
    <property type="entry name" value="RelE/ParE_toxin_dom_sf"/>
</dbReference>
<dbReference type="PANTHER" id="PTHR35601">
    <property type="entry name" value="TOXIN RELE"/>
    <property type="match status" value="1"/>
</dbReference>
<dbReference type="PANTHER" id="PTHR35601:SF1">
    <property type="entry name" value="TOXIN RELE"/>
    <property type="match status" value="1"/>
</dbReference>
<dbReference type="Pfam" id="PF05016">
    <property type="entry name" value="ParE_toxin"/>
    <property type="match status" value="1"/>
</dbReference>
<dbReference type="SUPFAM" id="SSF143011">
    <property type="entry name" value="RelE-like"/>
    <property type="match status" value="1"/>
</dbReference>
<comment type="function">
    <text evidence="1 2 3 4 5">Toxic component of a type II toxin-antitoxin (TA) system. Has RNase activity and preferentially cleaves at the 3'-end of purine ribonucleotides (By similarity). Overexpression in M.tuberculosis or M.smegmatis inhibits colony formation in a bacteriostatic rather than bacteriocidal fashion. Its toxic effect is neutralized by coexpression with cognate antitoxin RelB2 (shown only for M.smegmatis). Overexpression also increases the number of gentamicin-tolerant and levofloxacin-tolerant persister cells.</text>
</comment>
<comment type="function">
    <text>In combination with cognate antitoxin RelF represses its own promoter. Has been seen to bind DNA in complex with antitoxin RelF but not alone.</text>
</comment>
<comment type="subunit">
    <text evidence="5">Interacts with cognate antitoxin RelF, which neutralizes the toxin. Also interacts with non-cognate antitoxin RelB in vitro, in M.smegmatis this neutralizes the toxicity of this toxin.</text>
</comment>
<comment type="induction">
    <text evidence="2 4">Expressed in log phase cells. Induced by treatment with rifampicin and gentamicin as well as by oxidative, nitrosative and nutritional stress. Induced in the lungs of mice infected for 4 weeks. A member of the relFG operon.</text>
</comment>
<comment type="disruption phenotype">
    <text evidence="4">No visible phenotype in culture or upon infection of mice. Significantly fewer persister cells are generated in vitro following exposure to rifampicin and gentamicin, but in infected mice no differences are seen.</text>
</comment>
<comment type="similarity">
    <text evidence="6">Belongs to the RelE toxin family.</text>
</comment>
<protein>
    <recommendedName>
        <fullName>Toxin RelG</fullName>
        <ecNumber>3.1.-.-</ecNumber>
    </recommendedName>
    <alternativeName>
        <fullName>Putative endoribonuclease RelG</fullName>
    </alternativeName>
</protein>
<evidence type="ECO:0000250" key="1"/>
<evidence type="ECO:0000269" key="2">
    <source>
    </source>
</evidence>
<evidence type="ECO:0000269" key="3">
    <source>
    </source>
</evidence>
<evidence type="ECO:0000269" key="4">
    <source>
    </source>
</evidence>
<evidence type="ECO:0000269" key="5">
    <source>
    </source>
</evidence>
<evidence type="ECO:0000305" key="6"/>
<evidence type="ECO:0007829" key="7">
    <source>
        <dbReference type="PDB" id="3G5O"/>
    </source>
</evidence>
<proteinExistence type="evidence at protein level"/>